<evidence type="ECO:0000255" key="1">
    <source>
        <dbReference type="PROSITE-ProRule" id="PRU00538"/>
    </source>
</evidence>
<protein>
    <recommendedName>
        <fullName>JmjC domain-containing protein E</fullName>
    </recommendedName>
    <alternativeName>
        <fullName>Jumonji domain-containing protein E</fullName>
    </alternativeName>
</protein>
<dbReference type="EMBL" id="AAFI02000196">
    <property type="protein sequence ID" value="EAL61059.2"/>
    <property type="molecule type" value="Genomic_DNA"/>
</dbReference>
<dbReference type="RefSeq" id="XP_629464.2">
    <property type="nucleotide sequence ID" value="XM_629462.2"/>
</dbReference>
<dbReference type="SMR" id="Q54CS7"/>
<dbReference type="FunCoup" id="Q54CS7">
    <property type="interactions" value="30"/>
</dbReference>
<dbReference type="STRING" id="44689.Q54CS7"/>
<dbReference type="PaxDb" id="44689-DDB0238364"/>
<dbReference type="EnsemblProtists" id="EAL61059">
    <property type="protein sequence ID" value="EAL61059"/>
    <property type="gene ID" value="DDB_G0292770"/>
</dbReference>
<dbReference type="GeneID" id="8628854"/>
<dbReference type="KEGG" id="ddi:DDB_G0292770"/>
<dbReference type="dictyBase" id="DDB_G0292770">
    <property type="gene designation" value="jcdE"/>
</dbReference>
<dbReference type="VEuPathDB" id="AmoebaDB:DDB_G0292770"/>
<dbReference type="eggNOG" id="KOG2508">
    <property type="taxonomic scope" value="Eukaryota"/>
</dbReference>
<dbReference type="HOGENOM" id="CLU_016785_6_0_1"/>
<dbReference type="InParanoid" id="Q54CS7"/>
<dbReference type="OMA" id="YWHDMEF"/>
<dbReference type="PhylomeDB" id="Q54CS7"/>
<dbReference type="Reactome" id="R-DDI-9629569">
    <property type="pathway name" value="Protein hydroxylation"/>
</dbReference>
<dbReference type="PRO" id="PR:Q54CS7"/>
<dbReference type="Proteomes" id="UP000002195">
    <property type="component" value="Chromosome 6"/>
</dbReference>
<dbReference type="GO" id="GO:0005737">
    <property type="term" value="C:cytoplasm"/>
    <property type="evidence" value="ECO:0000318"/>
    <property type="project" value="GO_Central"/>
</dbReference>
<dbReference type="GO" id="GO:0016706">
    <property type="term" value="F:2-oxoglutarate-dependent dioxygenase activity"/>
    <property type="evidence" value="ECO:0000318"/>
    <property type="project" value="GO_Central"/>
</dbReference>
<dbReference type="GO" id="GO:0004175">
    <property type="term" value="F:endopeptidase activity"/>
    <property type="evidence" value="ECO:0000318"/>
    <property type="project" value="GO_Central"/>
</dbReference>
<dbReference type="FunFam" id="2.60.120.10:FF:000473">
    <property type="entry name" value="JmjC domain-containing protein E"/>
    <property type="match status" value="1"/>
</dbReference>
<dbReference type="Gene3D" id="2.60.120.10">
    <property type="entry name" value="Jelly Rolls"/>
    <property type="match status" value="1"/>
</dbReference>
<dbReference type="InterPro" id="IPR041667">
    <property type="entry name" value="Cupin_8"/>
</dbReference>
<dbReference type="InterPro" id="IPR003347">
    <property type="entry name" value="JmjC_dom"/>
</dbReference>
<dbReference type="InterPro" id="IPR014710">
    <property type="entry name" value="RmlC-like_jellyroll"/>
</dbReference>
<dbReference type="PANTHER" id="PTHR12461:SF99">
    <property type="entry name" value="BIFUNCTIONAL PEPTIDASE AND (3S)-LYSYL HYDROXYLASE JMJD7"/>
    <property type="match status" value="1"/>
</dbReference>
<dbReference type="PANTHER" id="PTHR12461">
    <property type="entry name" value="HYPOXIA-INDUCIBLE FACTOR 1 ALPHA INHIBITOR-RELATED"/>
    <property type="match status" value="1"/>
</dbReference>
<dbReference type="Pfam" id="PF13621">
    <property type="entry name" value="Cupin_8"/>
    <property type="match status" value="1"/>
</dbReference>
<dbReference type="SMART" id="SM00558">
    <property type="entry name" value="JmjC"/>
    <property type="match status" value="1"/>
</dbReference>
<dbReference type="SUPFAM" id="SSF51197">
    <property type="entry name" value="Clavaminate synthase-like"/>
    <property type="match status" value="1"/>
</dbReference>
<dbReference type="PROSITE" id="PS51184">
    <property type="entry name" value="JMJC"/>
    <property type="match status" value="1"/>
</dbReference>
<sequence length="353" mass="41401">MSDDEFIDEYDDIYSKLCQEAQDFLIIKDIERIEKPTALEFYREYVSQNKPVIITGLLENWKAYKEWSDDYLENVMKDVEVTVSITNDGLADAVKPINENDPKSERVFCKPFEKKIKFQEYIKHSKKSSKENKNKLAYYIQYQNNSLNVEYDKLLNDIDESVIDFAKEAFGSNIDATNFWMGQDKSVSSLHQDPYENMYCVVRGTKIFTLLPPIDYPFLYKSEFPSASFVNVGCDDNDENIKLEIQIDNDPKMNIPWIPVDPTETLENNIKLGYPLIERAHPITIRVEAGEVLYLPSLYFHRVAQESNKTSNSLSTIAINYWFDMKYGINYVYFQFLKETTKYQKQIKNKNKK</sequence>
<gene>
    <name type="primary">jcdE</name>
    <name type="ORF">DDB_G0292770</name>
</gene>
<reference key="1">
    <citation type="journal article" date="2005" name="Nature">
        <title>The genome of the social amoeba Dictyostelium discoideum.</title>
        <authorList>
            <person name="Eichinger L."/>
            <person name="Pachebat J.A."/>
            <person name="Gloeckner G."/>
            <person name="Rajandream M.A."/>
            <person name="Sucgang R."/>
            <person name="Berriman M."/>
            <person name="Song J."/>
            <person name="Olsen R."/>
            <person name="Szafranski K."/>
            <person name="Xu Q."/>
            <person name="Tunggal B."/>
            <person name="Kummerfeld S."/>
            <person name="Madera M."/>
            <person name="Konfortov B.A."/>
            <person name="Rivero F."/>
            <person name="Bankier A.T."/>
            <person name="Lehmann R."/>
            <person name="Hamlin N."/>
            <person name="Davies R."/>
            <person name="Gaudet P."/>
            <person name="Fey P."/>
            <person name="Pilcher K."/>
            <person name="Chen G."/>
            <person name="Saunders D."/>
            <person name="Sodergren E.J."/>
            <person name="Davis P."/>
            <person name="Kerhornou A."/>
            <person name="Nie X."/>
            <person name="Hall N."/>
            <person name="Anjard C."/>
            <person name="Hemphill L."/>
            <person name="Bason N."/>
            <person name="Farbrother P."/>
            <person name="Desany B."/>
            <person name="Just E."/>
            <person name="Morio T."/>
            <person name="Rost R."/>
            <person name="Churcher C.M."/>
            <person name="Cooper J."/>
            <person name="Haydock S."/>
            <person name="van Driessche N."/>
            <person name="Cronin A."/>
            <person name="Goodhead I."/>
            <person name="Muzny D.M."/>
            <person name="Mourier T."/>
            <person name="Pain A."/>
            <person name="Lu M."/>
            <person name="Harper D."/>
            <person name="Lindsay R."/>
            <person name="Hauser H."/>
            <person name="James K.D."/>
            <person name="Quiles M."/>
            <person name="Madan Babu M."/>
            <person name="Saito T."/>
            <person name="Buchrieser C."/>
            <person name="Wardroper A."/>
            <person name="Felder M."/>
            <person name="Thangavelu M."/>
            <person name="Johnson D."/>
            <person name="Knights A."/>
            <person name="Loulseged H."/>
            <person name="Mungall K.L."/>
            <person name="Oliver K."/>
            <person name="Price C."/>
            <person name="Quail M.A."/>
            <person name="Urushihara H."/>
            <person name="Hernandez J."/>
            <person name="Rabbinowitsch E."/>
            <person name="Steffen D."/>
            <person name="Sanders M."/>
            <person name="Ma J."/>
            <person name="Kohara Y."/>
            <person name="Sharp S."/>
            <person name="Simmonds M.N."/>
            <person name="Spiegler S."/>
            <person name="Tivey A."/>
            <person name="Sugano S."/>
            <person name="White B."/>
            <person name="Walker D."/>
            <person name="Woodward J.R."/>
            <person name="Winckler T."/>
            <person name="Tanaka Y."/>
            <person name="Shaulsky G."/>
            <person name="Schleicher M."/>
            <person name="Weinstock G.M."/>
            <person name="Rosenthal A."/>
            <person name="Cox E.C."/>
            <person name="Chisholm R.L."/>
            <person name="Gibbs R.A."/>
            <person name="Loomis W.F."/>
            <person name="Platzer M."/>
            <person name="Kay R.R."/>
            <person name="Williams J.G."/>
            <person name="Dear P.H."/>
            <person name="Noegel A.A."/>
            <person name="Barrell B.G."/>
            <person name="Kuspa A."/>
        </authorList>
    </citation>
    <scope>NUCLEOTIDE SEQUENCE [LARGE SCALE GENOMIC DNA]</scope>
    <source>
        <strain>AX4</strain>
    </source>
</reference>
<accession>Q54CS7</accession>
<feature type="chain" id="PRO_0000330927" description="JmjC domain-containing protein E">
    <location>
        <begin position="1"/>
        <end position="353"/>
    </location>
</feature>
<feature type="domain" description="JmjC" evidence="1">
    <location>
        <begin position="138"/>
        <end position="348"/>
    </location>
</feature>
<proteinExistence type="predicted"/>
<organism>
    <name type="scientific">Dictyostelium discoideum</name>
    <name type="common">Social amoeba</name>
    <dbReference type="NCBI Taxonomy" id="44689"/>
    <lineage>
        <taxon>Eukaryota</taxon>
        <taxon>Amoebozoa</taxon>
        <taxon>Evosea</taxon>
        <taxon>Eumycetozoa</taxon>
        <taxon>Dictyostelia</taxon>
        <taxon>Dictyosteliales</taxon>
        <taxon>Dictyosteliaceae</taxon>
        <taxon>Dictyostelium</taxon>
    </lineage>
</organism>
<name>JMJCE_DICDI</name>
<keyword id="KW-1185">Reference proteome</keyword>